<feature type="chain" id="PRO_1000079003" description="Chorismate synthase">
    <location>
        <begin position="1"/>
        <end position="397"/>
    </location>
</feature>
<feature type="binding site" evidence="1">
    <location>
        <position position="40"/>
    </location>
    <ligand>
        <name>NADP(+)</name>
        <dbReference type="ChEBI" id="CHEBI:58349"/>
    </ligand>
</feature>
<feature type="binding site" evidence="1">
    <location>
        <position position="46"/>
    </location>
    <ligand>
        <name>NADP(+)</name>
        <dbReference type="ChEBI" id="CHEBI:58349"/>
    </ligand>
</feature>
<feature type="binding site" evidence="1">
    <location>
        <begin position="129"/>
        <end position="131"/>
    </location>
    <ligand>
        <name>FMN</name>
        <dbReference type="ChEBI" id="CHEBI:58210"/>
    </ligand>
</feature>
<feature type="binding site" evidence="1">
    <location>
        <begin position="257"/>
        <end position="258"/>
    </location>
    <ligand>
        <name>FMN</name>
        <dbReference type="ChEBI" id="CHEBI:58210"/>
    </ligand>
</feature>
<feature type="binding site" evidence="1">
    <location>
        <position position="302"/>
    </location>
    <ligand>
        <name>FMN</name>
        <dbReference type="ChEBI" id="CHEBI:58210"/>
    </ligand>
</feature>
<feature type="binding site" evidence="1">
    <location>
        <begin position="317"/>
        <end position="321"/>
    </location>
    <ligand>
        <name>FMN</name>
        <dbReference type="ChEBI" id="CHEBI:58210"/>
    </ligand>
</feature>
<feature type="binding site" evidence="1">
    <location>
        <position position="343"/>
    </location>
    <ligand>
        <name>FMN</name>
        <dbReference type="ChEBI" id="CHEBI:58210"/>
    </ligand>
</feature>
<dbReference type="EC" id="4.2.3.5" evidence="1"/>
<dbReference type="EMBL" id="CP000607">
    <property type="protein sequence ID" value="ABP37265.1"/>
    <property type="molecule type" value="Genomic_DNA"/>
</dbReference>
<dbReference type="SMR" id="A4SFK6"/>
<dbReference type="STRING" id="290318.Cvib_1253"/>
<dbReference type="KEGG" id="pvi:Cvib_1253"/>
<dbReference type="eggNOG" id="COG0082">
    <property type="taxonomic scope" value="Bacteria"/>
</dbReference>
<dbReference type="HOGENOM" id="CLU_034547_2_0_10"/>
<dbReference type="OrthoDB" id="9771806at2"/>
<dbReference type="UniPathway" id="UPA00053">
    <property type="reaction ID" value="UER00090"/>
</dbReference>
<dbReference type="GO" id="GO:0005829">
    <property type="term" value="C:cytosol"/>
    <property type="evidence" value="ECO:0007669"/>
    <property type="project" value="TreeGrafter"/>
</dbReference>
<dbReference type="GO" id="GO:0004107">
    <property type="term" value="F:chorismate synthase activity"/>
    <property type="evidence" value="ECO:0007669"/>
    <property type="project" value="UniProtKB-UniRule"/>
</dbReference>
<dbReference type="GO" id="GO:0010181">
    <property type="term" value="F:FMN binding"/>
    <property type="evidence" value="ECO:0007669"/>
    <property type="project" value="TreeGrafter"/>
</dbReference>
<dbReference type="GO" id="GO:0008652">
    <property type="term" value="P:amino acid biosynthetic process"/>
    <property type="evidence" value="ECO:0007669"/>
    <property type="project" value="UniProtKB-KW"/>
</dbReference>
<dbReference type="GO" id="GO:0009073">
    <property type="term" value="P:aromatic amino acid family biosynthetic process"/>
    <property type="evidence" value="ECO:0007669"/>
    <property type="project" value="UniProtKB-KW"/>
</dbReference>
<dbReference type="GO" id="GO:0009423">
    <property type="term" value="P:chorismate biosynthetic process"/>
    <property type="evidence" value="ECO:0007669"/>
    <property type="project" value="UniProtKB-UniRule"/>
</dbReference>
<dbReference type="CDD" id="cd07304">
    <property type="entry name" value="Chorismate_synthase"/>
    <property type="match status" value="1"/>
</dbReference>
<dbReference type="FunFam" id="3.60.150.10:FF:000002">
    <property type="entry name" value="Chorismate synthase"/>
    <property type="match status" value="1"/>
</dbReference>
<dbReference type="Gene3D" id="3.60.150.10">
    <property type="entry name" value="Chorismate synthase AroC"/>
    <property type="match status" value="1"/>
</dbReference>
<dbReference type="HAMAP" id="MF_00300">
    <property type="entry name" value="Chorismate_synth"/>
    <property type="match status" value="1"/>
</dbReference>
<dbReference type="InterPro" id="IPR000453">
    <property type="entry name" value="Chorismate_synth"/>
</dbReference>
<dbReference type="InterPro" id="IPR035904">
    <property type="entry name" value="Chorismate_synth_AroC_sf"/>
</dbReference>
<dbReference type="InterPro" id="IPR020541">
    <property type="entry name" value="Chorismate_synthase_CS"/>
</dbReference>
<dbReference type="NCBIfam" id="TIGR00033">
    <property type="entry name" value="aroC"/>
    <property type="match status" value="1"/>
</dbReference>
<dbReference type="NCBIfam" id="NF003793">
    <property type="entry name" value="PRK05382.1"/>
    <property type="match status" value="1"/>
</dbReference>
<dbReference type="PANTHER" id="PTHR21085">
    <property type="entry name" value="CHORISMATE SYNTHASE"/>
    <property type="match status" value="1"/>
</dbReference>
<dbReference type="PANTHER" id="PTHR21085:SF0">
    <property type="entry name" value="CHORISMATE SYNTHASE"/>
    <property type="match status" value="1"/>
</dbReference>
<dbReference type="Pfam" id="PF01264">
    <property type="entry name" value="Chorismate_synt"/>
    <property type="match status" value="1"/>
</dbReference>
<dbReference type="PIRSF" id="PIRSF001456">
    <property type="entry name" value="Chorismate_synth"/>
    <property type="match status" value="1"/>
</dbReference>
<dbReference type="SUPFAM" id="SSF103263">
    <property type="entry name" value="Chorismate synthase, AroC"/>
    <property type="match status" value="1"/>
</dbReference>
<dbReference type="PROSITE" id="PS00787">
    <property type="entry name" value="CHORISMATE_SYNTHASE_1"/>
    <property type="match status" value="1"/>
</dbReference>
<organism>
    <name type="scientific">Chlorobium phaeovibrioides (strain DSM 265 / 1930)</name>
    <name type="common">Prosthecochloris vibrioformis (strain DSM 265)</name>
    <dbReference type="NCBI Taxonomy" id="290318"/>
    <lineage>
        <taxon>Bacteria</taxon>
        <taxon>Pseudomonadati</taxon>
        <taxon>Chlorobiota</taxon>
        <taxon>Chlorobiia</taxon>
        <taxon>Chlorobiales</taxon>
        <taxon>Chlorobiaceae</taxon>
        <taxon>Chlorobium/Pelodictyon group</taxon>
        <taxon>Chlorobium</taxon>
    </lineage>
</organism>
<gene>
    <name evidence="1" type="primary">aroC</name>
    <name type="ordered locus">Cvib_1253</name>
</gene>
<protein>
    <recommendedName>
        <fullName evidence="1">Chorismate synthase</fullName>
        <shortName evidence="1">CS</shortName>
        <ecNumber evidence="1">4.2.3.5</ecNumber>
    </recommendedName>
    <alternativeName>
        <fullName evidence="1">5-enolpyruvylshikimate-3-phosphate phospholyase</fullName>
    </alternativeName>
</protein>
<evidence type="ECO:0000255" key="1">
    <source>
        <dbReference type="HAMAP-Rule" id="MF_00300"/>
    </source>
</evidence>
<accession>A4SFK6</accession>
<proteinExistence type="inferred from homology"/>
<name>AROC_CHLPM</name>
<sequence>MIRYFTAGESHGPALSAIIEGMPAGVAVSREEIDLQLRRRQQGYGRGGRMKIEQDSAEVLSGIRFGKTIGSPIALVIRNRDWENWTDKMAQFESHEATTEKITIPRPGHADLAGRIKYGFNDIRPVIDRSSARETAARVAAGSLARTFLCQLGIEIGSRISSIGPVTDTGSDKTISALLEKGAECLAGAADRSEVRMLGKKAEEDAIAAIDLAKERGDTLGGIIEIYITGVPVGLGSYVQHDRRLDSQLAAAVMAIQAIKGVEIGPAFENARKPGSEVHDALHLVKGEGVERPTNRSGGIEGSMSSGETIHIRAAMKPISSMQSPLQSFDLATLQPVLSRFERSDTCAVPAAGVVAEAVVAPVIANALFEKFGGDHLEEIRNRLNHYREAVRSAFSG</sequence>
<keyword id="KW-0028">Amino-acid biosynthesis</keyword>
<keyword id="KW-0057">Aromatic amino acid biosynthesis</keyword>
<keyword id="KW-0274">FAD</keyword>
<keyword id="KW-0285">Flavoprotein</keyword>
<keyword id="KW-0288">FMN</keyword>
<keyword id="KW-0456">Lyase</keyword>
<keyword id="KW-0521">NADP</keyword>
<reference key="1">
    <citation type="submission" date="2007-03" db="EMBL/GenBank/DDBJ databases">
        <title>Complete sequence of Prosthecochloris vibrioformis DSM 265.</title>
        <authorList>
            <consortium name="US DOE Joint Genome Institute"/>
            <person name="Copeland A."/>
            <person name="Lucas S."/>
            <person name="Lapidus A."/>
            <person name="Barry K."/>
            <person name="Detter J.C."/>
            <person name="Glavina del Rio T."/>
            <person name="Hammon N."/>
            <person name="Israni S."/>
            <person name="Pitluck S."/>
            <person name="Schmutz J."/>
            <person name="Larimer F."/>
            <person name="Land M."/>
            <person name="Hauser L."/>
            <person name="Mikhailova N."/>
            <person name="Li T."/>
            <person name="Overmann J."/>
            <person name="Schuster S.C."/>
            <person name="Bryant D.A."/>
            <person name="Richardson P."/>
        </authorList>
    </citation>
    <scope>NUCLEOTIDE SEQUENCE [LARGE SCALE GENOMIC DNA]</scope>
    <source>
        <strain>DSM 265 / 1930</strain>
    </source>
</reference>
<comment type="function">
    <text evidence="1">Catalyzes the anti-1,4-elimination of the C-3 phosphate and the C-6 proR hydrogen from 5-enolpyruvylshikimate-3-phosphate (EPSP) to yield chorismate, which is the branch point compound that serves as the starting substrate for the three terminal pathways of aromatic amino acid biosynthesis. This reaction introduces a second double bond into the aromatic ring system.</text>
</comment>
<comment type="catalytic activity">
    <reaction evidence="1">
        <text>5-O-(1-carboxyvinyl)-3-phosphoshikimate = chorismate + phosphate</text>
        <dbReference type="Rhea" id="RHEA:21020"/>
        <dbReference type="ChEBI" id="CHEBI:29748"/>
        <dbReference type="ChEBI" id="CHEBI:43474"/>
        <dbReference type="ChEBI" id="CHEBI:57701"/>
        <dbReference type="EC" id="4.2.3.5"/>
    </reaction>
</comment>
<comment type="cofactor">
    <cofactor evidence="1">
        <name>FMNH2</name>
        <dbReference type="ChEBI" id="CHEBI:57618"/>
    </cofactor>
    <text evidence="1">Reduced FMN (FMNH(2)).</text>
</comment>
<comment type="pathway">
    <text evidence="1">Metabolic intermediate biosynthesis; chorismate biosynthesis; chorismate from D-erythrose 4-phosphate and phosphoenolpyruvate: step 7/7.</text>
</comment>
<comment type="subunit">
    <text evidence="1">Homotetramer.</text>
</comment>
<comment type="similarity">
    <text evidence="1">Belongs to the chorismate synthase family.</text>
</comment>